<accession>A0A1U9YI04</accession>
<reference key="1">
    <citation type="journal article" date="2017" name="Fungal Genet. Biol.">
        <title>Identification and characterization of the verticillin biosynthetic gene cluster in Clonostachys rogersoniana.</title>
        <authorList>
            <person name="Wang Y."/>
            <person name="Hu P."/>
            <person name="Pan Y."/>
            <person name="Zhu Y."/>
            <person name="Liu X."/>
            <person name="Che Y."/>
            <person name="Liu G."/>
        </authorList>
    </citation>
    <scope>NUCLEOTIDE SEQUENCE [GENOMIC DNA]</scope>
    <scope>FUNCTION</scope>
    <scope>DISRUPTION PHENOTYPE</scope>
    <scope>PATHWAY</scope>
    <source>
        <strain>XZC04-CC-302</strain>
    </source>
</reference>
<reference key="2">
    <citation type="journal article" date="2017" name="Microbiology">
        <title>VerZ, a Zn(II)2Cys6 DNA-binding protein, regulates the biosynthesis of verticillin in Clonostachys rogersoniana.</title>
        <authorList>
            <person name="Guo Z."/>
            <person name="Hao T."/>
            <person name="Wang Y."/>
            <person name="Pan Y."/>
            <person name="Ren F."/>
            <person name="Liu X."/>
            <person name="Che Y."/>
            <person name="Liu G."/>
        </authorList>
    </citation>
    <scope>INDUCTION</scope>
</reference>
<comment type="function">
    <text evidence="2 6">N-methyltransferase; part of the gene cluster that mediates the biosynthesis of 11'-deoxyverticillin A, one of the dimeric epipolythiodioxopiperazines (ETPs) from the verticillin family that act as mycotoxins (PubMed:28376389). 11'-deoxyverticillin A is required for normal conidiation (PubMed:28376389). The nonribosomal peptide synthetase verP is speculated to be responsible for condensation of amino acids to form the carbon skeleton of verticillin, whereas the cluster-specific tailoring enzymes are involved in further modifications leading to the production of 11'-deoxyverticillin A (Probable).</text>
</comment>
<comment type="pathway">
    <text evidence="2">Mycotoxin biosynthesis.</text>
</comment>
<comment type="induction">
    <text evidence="3">Expression is regulated by the cluster-specific regulator verZ.</text>
</comment>
<comment type="disruption phenotype">
    <text evidence="2">Completely abolishes the verticillin production.</text>
</comment>
<comment type="similarity">
    <text evidence="5">Belongs to the methyltransferase superfamily. LaeA methyltransferase family.</text>
</comment>
<organism>
    <name type="scientific">Clonostachys rogersoniana</name>
    <dbReference type="NCBI Taxonomy" id="122658"/>
    <lineage>
        <taxon>Eukaryota</taxon>
        <taxon>Fungi</taxon>
        <taxon>Dikarya</taxon>
        <taxon>Ascomycota</taxon>
        <taxon>Pezizomycotina</taxon>
        <taxon>Sordariomycetes</taxon>
        <taxon>Hypocreomycetidae</taxon>
        <taxon>Hypocreales</taxon>
        <taxon>Bionectriaceae</taxon>
        <taxon>Clonostachys</taxon>
    </lineage>
</organism>
<keyword id="KW-0489">Methyltransferase</keyword>
<keyword id="KW-0949">S-adenosyl-L-methionine</keyword>
<keyword id="KW-0808">Transferase</keyword>
<gene>
    <name evidence="4" type="primary">vern</name>
</gene>
<dbReference type="EC" id="2.1.1.-" evidence="1"/>
<dbReference type="EMBL" id="KY359203">
    <property type="protein sequence ID" value="AQZ42160.1"/>
    <property type="molecule type" value="Genomic_DNA"/>
</dbReference>
<dbReference type="SMR" id="A0A1U9YI04"/>
<dbReference type="GO" id="GO:0008168">
    <property type="term" value="F:methyltransferase activity"/>
    <property type="evidence" value="ECO:0007669"/>
    <property type="project" value="UniProtKB-KW"/>
</dbReference>
<dbReference type="GO" id="GO:0032259">
    <property type="term" value="P:methylation"/>
    <property type="evidence" value="ECO:0007669"/>
    <property type="project" value="UniProtKB-KW"/>
</dbReference>
<dbReference type="CDD" id="cd02440">
    <property type="entry name" value="AdoMet_MTases"/>
    <property type="match status" value="1"/>
</dbReference>
<dbReference type="Gene3D" id="3.40.50.150">
    <property type="entry name" value="Vaccinia Virus protein VP39"/>
    <property type="match status" value="1"/>
</dbReference>
<dbReference type="InterPro" id="IPR029063">
    <property type="entry name" value="SAM-dependent_MTases_sf"/>
</dbReference>
<dbReference type="PANTHER" id="PTHR43591">
    <property type="entry name" value="METHYLTRANSFERASE"/>
    <property type="match status" value="1"/>
</dbReference>
<dbReference type="Pfam" id="PF13489">
    <property type="entry name" value="Methyltransf_23"/>
    <property type="match status" value="1"/>
</dbReference>
<dbReference type="SUPFAM" id="SSF53335">
    <property type="entry name" value="S-adenosyl-L-methionine-dependent methyltransferases"/>
    <property type="match status" value="1"/>
</dbReference>
<evidence type="ECO:0000250" key="1">
    <source>
        <dbReference type="UniProtKB" id="Q4WMJ1"/>
    </source>
</evidence>
<evidence type="ECO:0000269" key="2">
    <source>
    </source>
</evidence>
<evidence type="ECO:0000269" key="3">
    <source>
    </source>
</evidence>
<evidence type="ECO:0000303" key="4">
    <source>
    </source>
</evidence>
<evidence type="ECO:0000305" key="5"/>
<evidence type="ECO:0000305" key="6">
    <source>
    </source>
</evidence>
<feature type="chain" id="PRO_0000450168" description="N-methyltransferase verN">
    <location>
        <begin position="1"/>
        <end position="287"/>
    </location>
</feature>
<protein>
    <recommendedName>
        <fullName evidence="1">N-methyltransferase verN</fullName>
        <ecNumber evidence="1">2.1.1.-</ecNumber>
    </recommendedName>
    <alternativeName>
        <fullName evidence="4">Verticillin biosynthesis cluster protein N</fullName>
    </alternativeName>
</protein>
<proteinExistence type="evidence at transcript level"/>
<sequence>MTEHTVSHANGSDLENAKKTYMLANNQKEIERMKNQHEWIKGSFGGLVKAPIDFDKKNQSILDSATADGTWLMDVRSLFPPETELIGFDIAPELYPPEGTRPRNVELVTADLLQGLPAQWIGRFDLVHQRFVFPNFETEVIREVLGRLMQCVKPGGWIQLVEPCAGENVSGPEPKWFLLLHKLANQFMRSAVPRDAILAILHEEGFVNINIESLDIVIGKHQRNKEMDARGRRSMRDSVSNMYPMITAEQLGMPKEEARAVLDKFEADMQKYRTAVRHVIIWAQRPE</sequence>
<name>VERN_CLORO</name>